<reference key="1">
    <citation type="journal article" date="1995" name="Mol. Endocrinol.">
        <title>Isolation of proteins that interact specifically with the retinoid X receptor: two novel orphan receptors.</title>
        <authorList>
            <person name="Seol W."/>
            <person name="Choi H.S."/>
            <person name="Moore D.D."/>
        </authorList>
    </citation>
    <scope>NUCLEOTIDE SEQUENCE [MRNA]</scope>
    <source>
        <tissue>Liver</tissue>
    </source>
</reference>
<reference key="2">
    <citation type="journal article" date="2000" name="Gene">
        <title>Structural characterisation of the mouse nuclear oxysterol receptor genes LXRalpha and LXRbeta.</title>
        <authorList>
            <person name="Alberti S."/>
            <person name="Steffensen K.R."/>
            <person name="Gustafsson J.-A."/>
        </authorList>
    </citation>
    <scope>NUCLEOTIDE SEQUENCE [GENOMIC DNA]</scope>
    <source>
        <strain>129/SvJ</strain>
        <tissue>Liver</tissue>
    </source>
</reference>
<reference key="3">
    <citation type="journal article" date="2004" name="Genome Res.">
        <title>The status, quality, and expansion of the NIH full-length cDNA project: the Mammalian Gene Collection (MGC).</title>
        <authorList>
            <consortium name="The MGC Project Team"/>
        </authorList>
    </citation>
    <scope>NUCLEOTIDE SEQUENCE [LARGE SCALE MRNA]</scope>
    <source>
        <strain>C57BL/6J</strain>
        <tissue>Brain</tissue>
    </source>
</reference>
<reference key="4">
    <citation type="journal article" date="2008" name="Mol. Pharmacol.">
        <title>Identification of oxysterol 7alpha-hydroxylase (Cyp7b1) as a novel retinoid-related orphan receptor alpha (RORalpha) (NR1F1) target gene and a functional cross-talk between RORalpha and liver X receptor (NR1H3).</title>
        <authorList>
            <person name="Wada T."/>
            <person name="Kang H.S."/>
            <person name="Angers M."/>
            <person name="Gong H."/>
            <person name="Bhatia S."/>
            <person name="Khadem S."/>
            <person name="Ren S."/>
            <person name="Ellis E."/>
            <person name="Strom S.C."/>
            <person name="Jetten A.M."/>
            <person name="Xie W."/>
        </authorList>
    </citation>
    <scope>FUNCTION IN METABOLISM REGULATION</scope>
</reference>
<reference key="5">
    <citation type="journal article" date="2009" name="Science">
        <title>LXR regulates cholesterol uptake through Idol-dependent ubiquitination of the LDL receptor.</title>
        <authorList>
            <person name="Zelcer N."/>
            <person name="Hong C."/>
            <person name="Boyadjian R."/>
            <person name="Tontonoz P."/>
        </authorList>
    </citation>
    <scope>FUNCTION</scope>
</reference>
<reference key="6">
    <citation type="journal article" date="2010" name="J. Biol. Chem.">
        <title>The E3 ubiquitin ligase IDOL induces the degradation of the low density lipoprotein receptor family members VLDLR and ApoER2.</title>
        <authorList>
            <person name="Hong C."/>
            <person name="Duit S."/>
            <person name="Jalonen P."/>
            <person name="Out R."/>
            <person name="Scheer L."/>
            <person name="Sorrentino V."/>
            <person name="Boyadjian R."/>
            <person name="Rodenburg K.W."/>
            <person name="Foley E."/>
            <person name="Korhonen L."/>
            <person name="Lindholm D."/>
            <person name="Nimpf J."/>
            <person name="van Berkel T.J."/>
            <person name="Tontonoz P."/>
            <person name="Zelcer N."/>
        </authorList>
    </citation>
    <scope>FUNCTION</scope>
</reference>
<reference key="7">
    <citation type="journal article" date="2013" name="Cell Metab.">
        <title>LXRs regulate ER stress and inflammation through dynamic modulation of membrane phospholipid composition.</title>
        <authorList>
            <person name="Rong X."/>
            <person name="Albert C.J."/>
            <person name="Hong C."/>
            <person name="Duerr M.A."/>
            <person name="Chamberlain B.T."/>
            <person name="Tarling E.J."/>
            <person name="Ito A."/>
            <person name="Gao J."/>
            <person name="Wang B."/>
            <person name="Edwards P.A."/>
            <person name="Jung M.E."/>
            <person name="Ford D.A."/>
            <person name="Tontonoz P."/>
        </authorList>
    </citation>
    <scope>FUNCTION</scope>
</reference>
<reference key="8">
    <citation type="journal article" date="2015" name="Elife">
        <title>Lpcat3-dependent production of arachidonoyl phospholipids is a key determinant of triglyceride secretion.</title>
        <authorList>
            <person name="Rong X."/>
            <person name="Wang B."/>
            <person name="Dunham M.M."/>
            <person name="Hedde P.N."/>
            <person name="Wong J.S."/>
            <person name="Gratton E."/>
            <person name="Young S.G."/>
            <person name="Ford D.A."/>
            <person name="Tontonoz P."/>
        </authorList>
    </citation>
    <scope>FUNCTION</scope>
</reference>
<reference key="9">
    <citation type="journal article" date="2017" name="J. Clin. Invest.">
        <title>ER phospholipid composition modulates lipogenesis during feeding and in obesity.</title>
        <authorList>
            <person name="Rong X."/>
            <person name="Wang B."/>
            <person name="Palladino E.N."/>
            <person name="de Aguiar Vallim T.Q."/>
            <person name="Ford D.A."/>
            <person name="Tontonoz P."/>
        </authorList>
    </citation>
    <scope>FUNCTION</scope>
</reference>
<proteinExistence type="evidence at protein level"/>
<gene>
    <name type="primary">Nr1h2</name>
    <name type="synonym">Lxrb</name>
    <name type="synonym">Rip15</name>
    <name type="synonym">Unr</name>
    <name type="synonym">Unr2</name>
</gene>
<evidence type="ECO:0000250" key="1">
    <source>
        <dbReference type="UniProtKB" id="P55055"/>
    </source>
</evidence>
<evidence type="ECO:0000255" key="2">
    <source>
        <dbReference type="PROSITE-ProRule" id="PRU00407"/>
    </source>
</evidence>
<evidence type="ECO:0000255" key="3">
    <source>
        <dbReference type="PROSITE-ProRule" id="PRU01189"/>
    </source>
</evidence>
<evidence type="ECO:0000256" key="4">
    <source>
        <dbReference type="SAM" id="MobiDB-lite"/>
    </source>
</evidence>
<evidence type="ECO:0000269" key="5">
    <source>
    </source>
</evidence>
<evidence type="ECO:0000269" key="6">
    <source>
    </source>
</evidence>
<evidence type="ECO:0000269" key="7">
    <source>
    </source>
</evidence>
<evidence type="ECO:0000269" key="8">
    <source>
    </source>
</evidence>
<evidence type="ECO:0000269" key="9">
    <source>
    </source>
</evidence>
<evidence type="ECO:0000269" key="10">
    <source>
    </source>
</evidence>
<evidence type="ECO:0000305" key="11"/>
<protein>
    <recommendedName>
        <fullName>Oxysterols receptor LXR-beta</fullName>
    </recommendedName>
    <alternativeName>
        <fullName>Liver X receptor beta</fullName>
    </alternativeName>
    <alternativeName>
        <fullName>Nuclear receptor subfamily 1 group H member 2</fullName>
    </alternativeName>
    <alternativeName>
        <fullName>Retinoid X receptor-interacting protein No.15</fullName>
    </alternativeName>
    <alternativeName>
        <fullName>Ubiquitously-expressed nuclear receptor</fullName>
    </alternativeName>
</protein>
<accession>Q60644</accession>
<name>NR1H2_MOUSE</name>
<keyword id="KW-0010">Activator</keyword>
<keyword id="KW-0238">DNA-binding</keyword>
<keyword id="KW-1017">Isopeptide bond</keyword>
<keyword id="KW-0479">Metal-binding</keyword>
<keyword id="KW-0539">Nucleus</keyword>
<keyword id="KW-0675">Receptor</keyword>
<keyword id="KW-1185">Reference proteome</keyword>
<keyword id="KW-0804">Transcription</keyword>
<keyword id="KW-0805">Transcription regulation</keyword>
<keyword id="KW-0832">Ubl conjugation</keyword>
<keyword id="KW-0862">Zinc</keyword>
<keyword id="KW-0863">Zinc-finger</keyword>
<organism>
    <name type="scientific">Mus musculus</name>
    <name type="common">Mouse</name>
    <dbReference type="NCBI Taxonomy" id="10090"/>
    <lineage>
        <taxon>Eukaryota</taxon>
        <taxon>Metazoa</taxon>
        <taxon>Chordata</taxon>
        <taxon>Craniata</taxon>
        <taxon>Vertebrata</taxon>
        <taxon>Euteleostomi</taxon>
        <taxon>Mammalia</taxon>
        <taxon>Eutheria</taxon>
        <taxon>Euarchontoglires</taxon>
        <taxon>Glires</taxon>
        <taxon>Rodentia</taxon>
        <taxon>Myomorpha</taxon>
        <taxon>Muroidea</taxon>
        <taxon>Muridae</taxon>
        <taxon>Murinae</taxon>
        <taxon>Mus</taxon>
        <taxon>Mus</taxon>
    </lineage>
</organism>
<sequence>MSSPTSSLDTPVPGNGSPQPSTSATSPTIKEEGQETDPPPGSEGSSSAYIVVILEPEDEPERKRKKGPAPKMLGHELCRVCGDKASGFHYNVLSCEGCKGFFRRSVVHGGAGRYACRGSGTCQMDAFMRRKCQLCRLRKCKEAGMREQCVLSEEQIRKKRIQKQQQQQPPPPSEPAASSSGRPAASPGTSEASSQGSGEGEGIQLTAAQELMIQQLVAAQLQCNKRSFSDQPKVTPWPLGADPQSRDARQQRFAHFTELAIISVQEIVDFAKQVPGFLQLGREDQIALLKASTIEIMLLETARRYNHETECITFLKDFTYSKDDFHRAGLQVEFINPIFEFSRAMRRLGLDDAEYALLIAINIFSADRPNVQEPSRVEALQQPYVEALLSYTRIKRPQDQLRFPRMLMKLVSLRTLSSVHSEQVFALRLQDKKLPPLLSEIWDVHE</sequence>
<comment type="function">
    <text evidence="1 5 6 7 8 9 10">Nuclear receptor that exhibits a ligand-dependent transcriptional activation activity (PubMed:18055760, PubMed:19520913, PubMed:20427281). Binds preferentially to double-stranded oligonucleotide direct repeats having the consensus half-site sequence 5'-AGGTCA-3' and 4-nt spacing (DR-4) (PubMed:18055760, PubMed:19520913, PubMed:20427281). Regulates cholesterol uptake through MYLIP-dependent ubiquitination of LDLR, VLDLR and LRP8; DLDLR and LRP8 (PubMed:18055760, PubMed:19520913, PubMed:20427281). Interplays functionally with RORA for the regulation of genes involved in liver metabolism (PubMed:18055760, PubMed:19520913, PubMed:20427281, PubMed:24206663, PubMed:28846071). Induces LPCAT3-dependent phospholipid remodeling in endoplasmic reticulum (ER) membranes of hepatocytes, driving SREBF1 processing and lipogenesis (PubMed:25806685, PubMed:28846071). Via LPCAT3, triggers the incorporation of arachidonate into phosphatidylcholines of ER membranes, increasing membrane dynamics and enabling triacylglycerols transfer to nascent very low-density lipoprotein (VLDL) particles (PubMed:25806685). Via LPCAT3 also counteracts lipid-induced ER stress response and inflammation, likely by modulating SRC kinase membrane compartmentalization and limiting the synthesis of lipid inflammatory mediators (PubMed:24206663). Plays an anti-inflammatory role during the hepatic acute phase response by acting as a corepressor: inhibits the hepatic acute phase response by preventing dissociation of the N-Cor corepressor complex (By similarity).</text>
</comment>
<comment type="subunit">
    <text evidence="1">Forms a heterodimer with RXR. Interacts with CCAR2 (via N-terminus) in a ligand-independent manner. Interacts (when sumoylated) with GPS2; interaction with GPS2 onto hepatic acute phase protein promoters prevents N-Cor corepressor complex dissociation (By similarity). Interacts with ABCA12 and ABCA1; this interaction is required for ABCA1 localization to the cell surface and is necessary for its normal activity and stability (By similarity).</text>
</comment>
<comment type="interaction">
    <interactant intactId="EBI-5276809">
        <id>Q60644</id>
    </interactant>
    <interactant intactId="EBI-1802965">
        <id>Q96EB6</id>
        <label>SIRT1</label>
    </interactant>
    <organismsDiffer>true</organismsDiffer>
    <experiments>2</experiments>
</comment>
<comment type="subcellular location">
    <subcellularLocation>
        <location evidence="2">Nucleus</location>
    </subcellularLocation>
</comment>
<comment type="tissue specificity">
    <text>Ubiquitous.</text>
</comment>
<comment type="PTM">
    <text evidence="1">Sumoylated by SUMO2 at Lys-395 and Lys-433 during the hepatic acute phase response, leading to promote interaction with GPS2 and prevent N-Cor corepressor complex dissociation.</text>
</comment>
<comment type="similarity">
    <text evidence="11">Belongs to the nuclear hormone receptor family. NR1 subfamily.</text>
</comment>
<feature type="chain" id="PRO_0000053533" description="Oxysterols receptor LXR-beta">
    <location>
        <begin position="1"/>
        <end position="446"/>
    </location>
</feature>
<feature type="domain" description="NR LBD" evidence="3">
    <location>
        <begin position="208"/>
        <end position="446"/>
    </location>
</feature>
<feature type="DNA-binding region" description="Nuclear receptor" evidence="2">
    <location>
        <begin position="75"/>
        <end position="152"/>
    </location>
</feature>
<feature type="zinc finger region" description="NR C4-type" evidence="2">
    <location>
        <begin position="78"/>
        <end position="98"/>
    </location>
</feature>
<feature type="zinc finger region" description="NR C4-type" evidence="2">
    <location>
        <begin position="116"/>
        <end position="140"/>
    </location>
</feature>
<feature type="region of interest" description="Transactivation AF-1; required for ligand-independent transactivation function" evidence="1">
    <location>
        <begin position="1"/>
        <end position="76"/>
    </location>
</feature>
<feature type="region of interest" description="Disordered" evidence="4">
    <location>
        <begin position="1"/>
        <end position="69"/>
    </location>
</feature>
<feature type="region of interest" description="Disordered" evidence="4">
    <location>
        <begin position="159"/>
        <end position="201"/>
    </location>
</feature>
<feature type="region of interest" description="Transactivation AF-2; required for ligand-dependent transactivation function; mediates interaction with CCAR2" evidence="1">
    <location>
        <begin position="205"/>
        <end position="446"/>
    </location>
</feature>
<feature type="compositionally biased region" description="Low complexity" evidence="4">
    <location>
        <begin position="17"/>
        <end position="28"/>
    </location>
</feature>
<feature type="compositionally biased region" description="Low complexity" evidence="4">
    <location>
        <begin position="175"/>
        <end position="196"/>
    </location>
</feature>
<feature type="cross-link" description="Glycyl lysine isopeptide (Lys-Gly) (interchain with G-Cter in SUMO2)" evidence="1">
    <location>
        <position position="395"/>
    </location>
</feature>
<feature type="cross-link" description="Glycyl lysine isopeptide (Lys-Gly) (interchain with G-Cter in SUMO2)" evidence="1">
    <location>
        <position position="433"/>
    </location>
</feature>
<dbReference type="EMBL" id="U09419">
    <property type="protein sequence ID" value="AAC52164.1"/>
    <property type="molecule type" value="mRNA"/>
</dbReference>
<dbReference type="EMBL" id="AJ132602">
    <property type="protein sequence ID" value="CAB51924.1"/>
    <property type="molecule type" value="Genomic_DNA"/>
</dbReference>
<dbReference type="EMBL" id="BC066025">
    <property type="protein sequence ID" value="AAH66025.1"/>
    <property type="molecule type" value="mRNA"/>
</dbReference>
<dbReference type="CCDS" id="CCDS21211.1"/>
<dbReference type="PIR" id="I49021">
    <property type="entry name" value="I49021"/>
</dbReference>
<dbReference type="RefSeq" id="NP_001272446.1">
    <property type="nucleotide sequence ID" value="NM_001285517.2"/>
</dbReference>
<dbReference type="RefSeq" id="NP_001272447.1">
    <property type="nucleotide sequence ID" value="NM_001285518.1"/>
</dbReference>
<dbReference type="RefSeq" id="NP_001272448.1">
    <property type="nucleotide sequence ID" value="NM_001285519.1"/>
</dbReference>
<dbReference type="RefSeq" id="NP_001403114.1">
    <property type="nucleotide sequence ID" value="NM_001416185.1"/>
</dbReference>
<dbReference type="RefSeq" id="NP_033499.1">
    <property type="nucleotide sequence ID" value="NM_009473.4"/>
</dbReference>
<dbReference type="RefSeq" id="XP_006540867.1">
    <property type="nucleotide sequence ID" value="XM_006540804.3"/>
</dbReference>
<dbReference type="SMR" id="Q60644"/>
<dbReference type="BioGRID" id="204450">
    <property type="interactions" value="4"/>
</dbReference>
<dbReference type="ComplexPortal" id="CPX-679">
    <property type="entry name" value="RXRalpha-LXRbeta nuclear hormone receptor complex"/>
</dbReference>
<dbReference type="ComplexPortal" id="CPX-706">
    <property type="entry name" value="RXRbeta-LXRbeta nuclear hormone receptor complex"/>
</dbReference>
<dbReference type="CORUM" id="Q60644"/>
<dbReference type="DIP" id="DIP-444N"/>
<dbReference type="FunCoup" id="Q60644">
    <property type="interactions" value="1939"/>
</dbReference>
<dbReference type="IntAct" id="Q60644">
    <property type="interactions" value="6"/>
</dbReference>
<dbReference type="MINT" id="Q60644"/>
<dbReference type="STRING" id="10090.ENSMUSP00000073188"/>
<dbReference type="BindingDB" id="Q60644"/>
<dbReference type="ChEMBL" id="CHEMBL2417346"/>
<dbReference type="GuidetoPHARMACOLOGY" id="601"/>
<dbReference type="GlyGen" id="Q60644">
    <property type="glycosylation" value="1 site, 1 O-linked glycan (1 site)"/>
</dbReference>
<dbReference type="PhosphoSitePlus" id="Q60644"/>
<dbReference type="PaxDb" id="10090-ENSMUSP00000103544"/>
<dbReference type="ProteomicsDB" id="295517"/>
<dbReference type="Antibodypedia" id="9326">
    <property type="antibodies" value="402 antibodies from 41 providers"/>
</dbReference>
<dbReference type="DNASU" id="22260"/>
<dbReference type="Ensembl" id="ENSMUST00000073488.12">
    <property type="protein sequence ID" value="ENSMUSP00000073188.6"/>
    <property type="gene ID" value="ENSMUSG00000060601.14"/>
</dbReference>
<dbReference type="Ensembl" id="ENSMUST00000107912.8">
    <property type="protein sequence ID" value="ENSMUSP00000103545.2"/>
    <property type="gene ID" value="ENSMUSG00000060601.14"/>
</dbReference>
<dbReference type="Ensembl" id="ENSMUST00000167197.8">
    <property type="protein sequence ID" value="ENSMUSP00000126788.2"/>
    <property type="gene ID" value="ENSMUSG00000060601.14"/>
</dbReference>
<dbReference type="GeneID" id="22260"/>
<dbReference type="KEGG" id="mmu:22260"/>
<dbReference type="UCSC" id="uc009gpz.2">
    <property type="organism name" value="mouse"/>
</dbReference>
<dbReference type="AGR" id="MGI:1352463"/>
<dbReference type="CTD" id="7376"/>
<dbReference type="MGI" id="MGI:1352463">
    <property type="gene designation" value="Nr1h2"/>
</dbReference>
<dbReference type="VEuPathDB" id="HostDB:ENSMUSG00000060601"/>
<dbReference type="eggNOG" id="KOG3575">
    <property type="taxonomic scope" value="Eukaryota"/>
</dbReference>
<dbReference type="GeneTree" id="ENSGT00940000161465"/>
<dbReference type="InParanoid" id="Q60644"/>
<dbReference type="OMA" id="PCKEEMS"/>
<dbReference type="OrthoDB" id="5837785at2759"/>
<dbReference type="PhylomeDB" id="Q60644"/>
<dbReference type="Reactome" id="R-MMU-383280">
    <property type="pathway name" value="Nuclear Receptor transcription pathway"/>
</dbReference>
<dbReference type="Reactome" id="R-MMU-4090294">
    <property type="pathway name" value="SUMOylation of intracellular receptors"/>
</dbReference>
<dbReference type="Reactome" id="R-MMU-8866427">
    <property type="pathway name" value="VLDLR internalisation and degradation"/>
</dbReference>
<dbReference type="Reactome" id="R-MMU-9029569">
    <property type="pathway name" value="NR1H3 &amp; NR1H2 regulate gene expression linked to cholesterol transport and efflux"/>
</dbReference>
<dbReference type="Reactome" id="R-MMU-9623433">
    <property type="pathway name" value="NR1H2 &amp; NR1H3 regulate gene expression to control bile acid homeostasis"/>
</dbReference>
<dbReference type="BioGRID-ORCS" id="22260">
    <property type="hits" value="6 hits in 82 CRISPR screens"/>
</dbReference>
<dbReference type="ChiTaRS" id="Nr1h2">
    <property type="organism name" value="mouse"/>
</dbReference>
<dbReference type="PRO" id="PR:Q60644"/>
<dbReference type="Proteomes" id="UP000000589">
    <property type="component" value="Chromosome 7"/>
</dbReference>
<dbReference type="RNAct" id="Q60644">
    <property type="molecule type" value="protein"/>
</dbReference>
<dbReference type="Bgee" id="ENSMUSG00000060601">
    <property type="expression patterns" value="Expressed in granulocyte and 252 other cell types or tissues"/>
</dbReference>
<dbReference type="ExpressionAtlas" id="Q60644">
    <property type="expression patterns" value="baseline and differential"/>
</dbReference>
<dbReference type="GO" id="GO:0005737">
    <property type="term" value="C:cytoplasm"/>
    <property type="evidence" value="ECO:0007669"/>
    <property type="project" value="Ensembl"/>
</dbReference>
<dbReference type="GO" id="GO:0005634">
    <property type="term" value="C:nucleus"/>
    <property type="evidence" value="ECO:0000314"/>
    <property type="project" value="BHF-UCL"/>
</dbReference>
<dbReference type="GO" id="GO:0090575">
    <property type="term" value="C:RNA polymerase II transcription regulator complex"/>
    <property type="evidence" value="ECO:0000266"/>
    <property type="project" value="ComplexPortal"/>
</dbReference>
<dbReference type="GO" id="GO:0034191">
    <property type="term" value="F:apolipoprotein A-I receptor binding"/>
    <property type="evidence" value="ECO:0007669"/>
    <property type="project" value="Ensembl"/>
</dbReference>
<dbReference type="GO" id="GO:0051117">
    <property type="term" value="F:ATPase binding"/>
    <property type="evidence" value="ECO:0007669"/>
    <property type="project" value="Ensembl"/>
</dbReference>
<dbReference type="GO" id="GO:0031490">
    <property type="term" value="F:chromatin DNA binding"/>
    <property type="evidence" value="ECO:0000314"/>
    <property type="project" value="MGI"/>
</dbReference>
<dbReference type="GO" id="GO:0003677">
    <property type="term" value="F:DNA binding"/>
    <property type="evidence" value="ECO:0000314"/>
    <property type="project" value="MGI"/>
</dbReference>
<dbReference type="GO" id="GO:0001228">
    <property type="term" value="F:DNA-binding transcription activator activity, RNA polymerase II-specific"/>
    <property type="evidence" value="ECO:0007669"/>
    <property type="project" value="Ensembl"/>
</dbReference>
<dbReference type="GO" id="GO:0003700">
    <property type="term" value="F:DNA-binding transcription factor activity"/>
    <property type="evidence" value="ECO:0000314"/>
    <property type="project" value="MGI"/>
</dbReference>
<dbReference type="GO" id="GO:0004879">
    <property type="term" value="F:nuclear receptor activity"/>
    <property type="evidence" value="ECO:0000314"/>
    <property type="project" value="MGI"/>
</dbReference>
<dbReference type="GO" id="GO:0046965">
    <property type="term" value="F:nuclear retinoid X receptor binding"/>
    <property type="evidence" value="ECO:0000314"/>
    <property type="project" value="MGI"/>
</dbReference>
<dbReference type="GO" id="GO:0000978">
    <property type="term" value="F:RNA polymerase II cis-regulatory region sequence-specific DNA binding"/>
    <property type="evidence" value="ECO:0007669"/>
    <property type="project" value="Ensembl"/>
</dbReference>
<dbReference type="GO" id="GO:0008270">
    <property type="term" value="F:zinc ion binding"/>
    <property type="evidence" value="ECO:0007669"/>
    <property type="project" value="UniProtKB-KW"/>
</dbReference>
<dbReference type="GO" id="GO:0042632">
    <property type="term" value="P:cholesterol homeostasis"/>
    <property type="evidence" value="ECO:0000314"/>
    <property type="project" value="BHF-UCL"/>
</dbReference>
<dbReference type="GO" id="GO:0009755">
    <property type="term" value="P:hormone-mediated signaling pathway"/>
    <property type="evidence" value="ECO:0000250"/>
    <property type="project" value="ComplexPortal"/>
</dbReference>
<dbReference type="GO" id="GO:0055088">
    <property type="term" value="P:lipid homeostasis"/>
    <property type="evidence" value="ECO:0000315"/>
    <property type="project" value="BHF-UCL"/>
</dbReference>
<dbReference type="GO" id="GO:0006629">
    <property type="term" value="P:lipid metabolic process"/>
    <property type="evidence" value="ECO:0000314"/>
    <property type="project" value="MGI"/>
</dbReference>
<dbReference type="GO" id="GO:0042789">
    <property type="term" value="P:mRNA transcription by RNA polymerase II"/>
    <property type="evidence" value="ECO:0000250"/>
    <property type="project" value="ComplexPortal"/>
</dbReference>
<dbReference type="GO" id="GO:0010887">
    <property type="term" value="P:negative regulation of cholesterol storage"/>
    <property type="evidence" value="ECO:0007669"/>
    <property type="project" value="Ensembl"/>
</dbReference>
<dbReference type="GO" id="GO:0120163">
    <property type="term" value="P:negative regulation of cold-induced thermogenesis"/>
    <property type="evidence" value="ECO:0000316"/>
    <property type="project" value="YuBioLab"/>
</dbReference>
<dbReference type="GO" id="GO:0010629">
    <property type="term" value="P:negative regulation of gene expression"/>
    <property type="evidence" value="ECO:0007669"/>
    <property type="project" value="Ensembl"/>
</dbReference>
<dbReference type="GO" id="GO:0032369">
    <property type="term" value="P:negative regulation of lipid transport"/>
    <property type="evidence" value="ECO:0007669"/>
    <property type="project" value="Ensembl"/>
</dbReference>
<dbReference type="GO" id="GO:0048550">
    <property type="term" value="P:negative regulation of pinocytosis"/>
    <property type="evidence" value="ECO:0007669"/>
    <property type="project" value="Ensembl"/>
</dbReference>
<dbReference type="GO" id="GO:0045861">
    <property type="term" value="P:negative regulation of proteolysis"/>
    <property type="evidence" value="ECO:0000315"/>
    <property type="project" value="BHF-UCL"/>
</dbReference>
<dbReference type="GO" id="GO:1903573">
    <property type="term" value="P:negative regulation of response to endoplasmic reticulum stress"/>
    <property type="evidence" value="ECO:0000314"/>
    <property type="project" value="UniProtKB"/>
</dbReference>
<dbReference type="GO" id="GO:0000122">
    <property type="term" value="P:negative regulation of transcription by RNA polymerase II"/>
    <property type="evidence" value="ECO:0000315"/>
    <property type="project" value="BHF-UCL"/>
</dbReference>
<dbReference type="GO" id="GO:0036151">
    <property type="term" value="P:phosphatidylcholine acyl-chain remodeling"/>
    <property type="evidence" value="ECO:0000315"/>
    <property type="project" value="UniProtKB"/>
</dbReference>
<dbReference type="GO" id="GO:0010875">
    <property type="term" value="P:positive regulation of cholesterol efflux"/>
    <property type="evidence" value="ECO:0000314"/>
    <property type="project" value="BHF-UCL"/>
</dbReference>
<dbReference type="GO" id="GO:0045723">
    <property type="term" value="P:positive regulation of fatty acid biosynthetic process"/>
    <property type="evidence" value="ECO:0007669"/>
    <property type="project" value="Ensembl"/>
</dbReference>
<dbReference type="GO" id="GO:0010628">
    <property type="term" value="P:positive regulation of gene expression"/>
    <property type="evidence" value="ECO:0007669"/>
    <property type="project" value="Ensembl"/>
</dbReference>
<dbReference type="GO" id="GO:0090108">
    <property type="term" value="P:positive regulation of high-density lipoprotein particle assembly"/>
    <property type="evidence" value="ECO:0000314"/>
    <property type="project" value="BHF-UCL"/>
</dbReference>
<dbReference type="GO" id="GO:0010884">
    <property type="term" value="P:positive regulation of lipid storage"/>
    <property type="evidence" value="ECO:0000315"/>
    <property type="project" value="BHF-UCL"/>
</dbReference>
<dbReference type="GO" id="GO:1902895">
    <property type="term" value="P:positive regulation of miRNA transcription"/>
    <property type="evidence" value="ECO:0000314"/>
    <property type="project" value="ARUK-UCL"/>
</dbReference>
<dbReference type="GO" id="GO:0090187">
    <property type="term" value="P:positive regulation of pancreatic juice secretion"/>
    <property type="evidence" value="ECO:0000315"/>
    <property type="project" value="BHF-UCL"/>
</dbReference>
<dbReference type="GO" id="GO:0090340">
    <property type="term" value="P:positive regulation of secretion of lysosomal enzymes"/>
    <property type="evidence" value="ECO:0000315"/>
    <property type="project" value="BHF-UCL"/>
</dbReference>
<dbReference type="GO" id="GO:0045944">
    <property type="term" value="P:positive regulation of transcription by RNA polymerase II"/>
    <property type="evidence" value="ECO:0000314"/>
    <property type="project" value="BHF-UCL"/>
</dbReference>
<dbReference type="GO" id="GO:0010867">
    <property type="term" value="P:positive regulation of triglyceride biosynthetic process"/>
    <property type="evidence" value="ECO:0007669"/>
    <property type="project" value="Ensembl"/>
</dbReference>
<dbReference type="GO" id="GO:0006355">
    <property type="term" value="P:regulation of DNA-templated transcription"/>
    <property type="evidence" value="ECO:0000314"/>
    <property type="project" value="MGI"/>
</dbReference>
<dbReference type="GO" id="GO:0006357">
    <property type="term" value="P:regulation of transcription by RNA polymerase II"/>
    <property type="evidence" value="ECO:0000316"/>
    <property type="project" value="MGI"/>
</dbReference>
<dbReference type="GO" id="GO:0031667">
    <property type="term" value="P:response to nutrient levels"/>
    <property type="evidence" value="ECO:0007669"/>
    <property type="project" value="Ensembl"/>
</dbReference>
<dbReference type="GO" id="GO:0048384">
    <property type="term" value="P:retinoic acid receptor signaling pathway"/>
    <property type="evidence" value="ECO:0007669"/>
    <property type="project" value="Ensembl"/>
</dbReference>
<dbReference type="CDD" id="cd06954">
    <property type="entry name" value="NR_LBD_LXR"/>
    <property type="match status" value="1"/>
</dbReference>
<dbReference type="FunFam" id="1.10.565.10:FF:000014">
    <property type="entry name" value="Oxysterols receptor LXR-alpha isoform 1"/>
    <property type="match status" value="1"/>
</dbReference>
<dbReference type="FunFam" id="3.30.50.10:FF:000017">
    <property type="entry name" value="Oxysterols receptor LXR-alpha isoform 1"/>
    <property type="match status" value="1"/>
</dbReference>
<dbReference type="Gene3D" id="3.30.50.10">
    <property type="entry name" value="Erythroid Transcription Factor GATA-1, subunit A"/>
    <property type="match status" value="1"/>
</dbReference>
<dbReference type="Gene3D" id="1.10.565.10">
    <property type="entry name" value="Retinoid X Receptor"/>
    <property type="match status" value="1"/>
</dbReference>
<dbReference type="InterPro" id="IPR023257">
    <property type="entry name" value="Liver_X_rcpt"/>
</dbReference>
<dbReference type="InterPro" id="IPR035500">
    <property type="entry name" value="NHR-like_dom_sf"/>
</dbReference>
<dbReference type="InterPro" id="IPR000536">
    <property type="entry name" value="Nucl_hrmn_rcpt_lig-bd"/>
</dbReference>
<dbReference type="InterPro" id="IPR050234">
    <property type="entry name" value="Nuclear_hormone_rcpt_NR1"/>
</dbReference>
<dbReference type="InterPro" id="IPR001723">
    <property type="entry name" value="Nuclear_hrmn_rcpt"/>
</dbReference>
<dbReference type="InterPro" id="IPR001628">
    <property type="entry name" value="Znf_hrmn_rcpt"/>
</dbReference>
<dbReference type="InterPro" id="IPR013088">
    <property type="entry name" value="Znf_NHR/GATA"/>
</dbReference>
<dbReference type="PANTHER" id="PTHR24082">
    <property type="entry name" value="NUCLEAR HORMONE RECEPTOR"/>
    <property type="match status" value="1"/>
</dbReference>
<dbReference type="PANTHER" id="PTHR24082:SF316">
    <property type="entry name" value="OXYSTEROLS RECEPTOR LXR-BETA"/>
    <property type="match status" value="1"/>
</dbReference>
<dbReference type="Pfam" id="PF00104">
    <property type="entry name" value="Hormone_recep"/>
    <property type="match status" value="1"/>
</dbReference>
<dbReference type="Pfam" id="PF00105">
    <property type="entry name" value="zf-C4"/>
    <property type="match status" value="1"/>
</dbReference>
<dbReference type="PRINTS" id="PR02034">
    <property type="entry name" value="LIVERXRECPTR"/>
</dbReference>
<dbReference type="PRINTS" id="PR00398">
    <property type="entry name" value="STRDHORMONER"/>
</dbReference>
<dbReference type="PRINTS" id="PR00047">
    <property type="entry name" value="STROIDFINGER"/>
</dbReference>
<dbReference type="SMART" id="SM00430">
    <property type="entry name" value="HOLI"/>
    <property type="match status" value="1"/>
</dbReference>
<dbReference type="SMART" id="SM00399">
    <property type="entry name" value="ZnF_C4"/>
    <property type="match status" value="1"/>
</dbReference>
<dbReference type="SUPFAM" id="SSF57716">
    <property type="entry name" value="Glucocorticoid receptor-like (DNA-binding domain)"/>
    <property type="match status" value="1"/>
</dbReference>
<dbReference type="SUPFAM" id="SSF48508">
    <property type="entry name" value="Nuclear receptor ligand-binding domain"/>
    <property type="match status" value="1"/>
</dbReference>
<dbReference type="PROSITE" id="PS51843">
    <property type="entry name" value="NR_LBD"/>
    <property type="match status" value="1"/>
</dbReference>
<dbReference type="PROSITE" id="PS00031">
    <property type="entry name" value="NUCLEAR_REC_DBD_1"/>
    <property type="match status" value="1"/>
</dbReference>
<dbReference type="PROSITE" id="PS51030">
    <property type="entry name" value="NUCLEAR_REC_DBD_2"/>
    <property type="match status" value="1"/>
</dbReference>